<dbReference type="EC" id="2.7.7.6" evidence="1"/>
<dbReference type="EMBL" id="CP000554">
    <property type="protein sequence ID" value="ABM77191.1"/>
    <property type="molecule type" value="Genomic_DNA"/>
</dbReference>
<dbReference type="RefSeq" id="WP_011825116.1">
    <property type="nucleotide sequence ID" value="NC_008820.1"/>
</dbReference>
<dbReference type="SMR" id="A2C6T1"/>
<dbReference type="STRING" id="59922.P9303_04391"/>
<dbReference type="KEGG" id="pmf:P9303_04391"/>
<dbReference type="HOGENOM" id="CLU_000524_1_0_3"/>
<dbReference type="BioCyc" id="PMAR59922:G1G80-407-MONOMER"/>
<dbReference type="Proteomes" id="UP000002274">
    <property type="component" value="Chromosome"/>
</dbReference>
<dbReference type="GO" id="GO:0000428">
    <property type="term" value="C:DNA-directed RNA polymerase complex"/>
    <property type="evidence" value="ECO:0007669"/>
    <property type="project" value="UniProtKB-KW"/>
</dbReference>
<dbReference type="GO" id="GO:0003677">
    <property type="term" value="F:DNA binding"/>
    <property type="evidence" value="ECO:0007669"/>
    <property type="project" value="UniProtKB-UniRule"/>
</dbReference>
<dbReference type="GO" id="GO:0003899">
    <property type="term" value="F:DNA-directed RNA polymerase activity"/>
    <property type="evidence" value="ECO:0007669"/>
    <property type="project" value="UniProtKB-UniRule"/>
</dbReference>
<dbReference type="GO" id="GO:0008270">
    <property type="term" value="F:zinc ion binding"/>
    <property type="evidence" value="ECO:0007669"/>
    <property type="project" value="UniProtKB-UniRule"/>
</dbReference>
<dbReference type="GO" id="GO:0006351">
    <property type="term" value="P:DNA-templated transcription"/>
    <property type="evidence" value="ECO:0007669"/>
    <property type="project" value="UniProtKB-UniRule"/>
</dbReference>
<dbReference type="CDD" id="cd02655">
    <property type="entry name" value="RNAP_beta'_C"/>
    <property type="match status" value="1"/>
</dbReference>
<dbReference type="FunFam" id="1.10.150.390:FF:000002">
    <property type="entry name" value="DNA-directed RNA polymerase subunit beta"/>
    <property type="match status" value="1"/>
</dbReference>
<dbReference type="Gene3D" id="1.10.132.30">
    <property type="match status" value="1"/>
</dbReference>
<dbReference type="Gene3D" id="1.10.150.390">
    <property type="match status" value="1"/>
</dbReference>
<dbReference type="Gene3D" id="1.10.1790.20">
    <property type="match status" value="1"/>
</dbReference>
<dbReference type="Gene3D" id="2.40.50.100">
    <property type="match status" value="1"/>
</dbReference>
<dbReference type="Gene3D" id="1.10.274.100">
    <property type="entry name" value="RNA polymerase Rpb1, domain 3"/>
    <property type="match status" value="1"/>
</dbReference>
<dbReference type="HAMAP" id="MF_01324">
    <property type="entry name" value="RNApol_bact_RpoC2"/>
    <property type="match status" value="1"/>
</dbReference>
<dbReference type="InterPro" id="IPR012756">
    <property type="entry name" value="DNA-dir_RpoC2_beta_pp"/>
</dbReference>
<dbReference type="InterPro" id="IPR045867">
    <property type="entry name" value="DNA-dir_RpoC_beta_prime"/>
</dbReference>
<dbReference type="InterPro" id="IPR007066">
    <property type="entry name" value="RNA_pol_Rpb1_3"/>
</dbReference>
<dbReference type="InterPro" id="IPR042102">
    <property type="entry name" value="RNA_pol_Rpb1_3_sf"/>
</dbReference>
<dbReference type="InterPro" id="IPR007083">
    <property type="entry name" value="RNA_pol_Rpb1_4"/>
</dbReference>
<dbReference type="InterPro" id="IPR007081">
    <property type="entry name" value="RNA_pol_Rpb1_5"/>
</dbReference>
<dbReference type="InterPro" id="IPR038120">
    <property type="entry name" value="Rpb1_funnel_sf"/>
</dbReference>
<dbReference type="NCBIfam" id="NF002724">
    <property type="entry name" value="PRK02597.1"/>
    <property type="match status" value="1"/>
</dbReference>
<dbReference type="NCBIfam" id="TIGR02388">
    <property type="entry name" value="rpoC2_cyan"/>
    <property type="match status" value="1"/>
</dbReference>
<dbReference type="PANTHER" id="PTHR19376">
    <property type="entry name" value="DNA-DIRECTED RNA POLYMERASE"/>
    <property type="match status" value="1"/>
</dbReference>
<dbReference type="PANTHER" id="PTHR19376:SF54">
    <property type="entry name" value="DNA-DIRECTED RNA POLYMERASE SUBUNIT BETA"/>
    <property type="match status" value="1"/>
</dbReference>
<dbReference type="Pfam" id="PF04983">
    <property type="entry name" value="RNA_pol_Rpb1_3"/>
    <property type="match status" value="1"/>
</dbReference>
<dbReference type="Pfam" id="PF05000">
    <property type="entry name" value="RNA_pol_Rpb1_4"/>
    <property type="match status" value="1"/>
</dbReference>
<dbReference type="Pfam" id="PF04998">
    <property type="entry name" value="RNA_pol_Rpb1_5"/>
    <property type="match status" value="2"/>
</dbReference>
<dbReference type="SUPFAM" id="SSF64484">
    <property type="entry name" value="beta and beta-prime subunits of DNA dependent RNA-polymerase"/>
    <property type="match status" value="1"/>
</dbReference>
<reference key="1">
    <citation type="journal article" date="2007" name="PLoS Genet.">
        <title>Patterns and implications of gene gain and loss in the evolution of Prochlorococcus.</title>
        <authorList>
            <person name="Kettler G.C."/>
            <person name="Martiny A.C."/>
            <person name="Huang K."/>
            <person name="Zucker J."/>
            <person name="Coleman M.L."/>
            <person name="Rodrigue S."/>
            <person name="Chen F."/>
            <person name="Lapidus A."/>
            <person name="Ferriera S."/>
            <person name="Johnson J."/>
            <person name="Steglich C."/>
            <person name="Church G.M."/>
            <person name="Richardson P."/>
            <person name="Chisholm S.W."/>
        </authorList>
    </citation>
    <scope>NUCLEOTIDE SEQUENCE [LARGE SCALE GENOMIC DNA]</scope>
    <source>
        <strain>MIT 9303</strain>
    </source>
</reference>
<proteinExistence type="inferred from homology"/>
<protein>
    <recommendedName>
        <fullName evidence="1">DNA-directed RNA polymerase subunit beta'</fullName>
        <shortName evidence="1">RNAP subunit beta'</shortName>
        <ecNumber evidence="1">2.7.7.6</ecNumber>
    </recommendedName>
    <alternativeName>
        <fullName evidence="1">RNA polymerase subunit beta'</fullName>
    </alternativeName>
    <alternativeName>
        <fullName evidence="1">Transcriptase subunit beta'</fullName>
    </alternativeName>
</protein>
<name>RPOC2_PROM3</name>
<keyword id="KW-0240">DNA-directed RNA polymerase</keyword>
<keyword id="KW-0479">Metal-binding</keyword>
<keyword id="KW-0548">Nucleotidyltransferase</keyword>
<keyword id="KW-0804">Transcription</keyword>
<keyword id="KW-0808">Transferase</keyword>
<keyword id="KW-0862">Zinc</keyword>
<organism>
    <name type="scientific">Prochlorococcus marinus (strain MIT 9303)</name>
    <dbReference type="NCBI Taxonomy" id="59922"/>
    <lineage>
        <taxon>Bacteria</taxon>
        <taxon>Bacillati</taxon>
        <taxon>Cyanobacteriota</taxon>
        <taxon>Cyanophyceae</taxon>
        <taxon>Synechococcales</taxon>
        <taxon>Prochlorococcaceae</taxon>
        <taxon>Prochlorococcus</taxon>
    </lineage>
</organism>
<gene>
    <name evidence="1" type="primary">rpoC2</name>
    <name type="ordered locus">P9303_04391</name>
</gene>
<evidence type="ECO:0000255" key="1">
    <source>
        <dbReference type="HAMAP-Rule" id="MF_01324"/>
    </source>
</evidence>
<evidence type="ECO:0000256" key="2">
    <source>
        <dbReference type="SAM" id="MobiDB-lite"/>
    </source>
</evidence>
<comment type="function">
    <text evidence="1">DNA-dependent RNA polymerase catalyzes the transcription of DNA into RNA using the four ribonucleoside triphosphates as substrates.</text>
</comment>
<comment type="catalytic activity">
    <reaction evidence="1">
        <text>RNA(n) + a ribonucleoside 5'-triphosphate = RNA(n+1) + diphosphate</text>
        <dbReference type="Rhea" id="RHEA:21248"/>
        <dbReference type="Rhea" id="RHEA-COMP:14527"/>
        <dbReference type="Rhea" id="RHEA-COMP:17342"/>
        <dbReference type="ChEBI" id="CHEBI:33019"/>
        <dbReference type="ChEBI" id="CHEBI:61557"/>
        <dbReference type="ChEBI" id="CHEBI:140395"/>
        <dbReference type="EC" id="2.7.7.6"/>
    </reaction>
</comment>
<comment type="cofactor">
    <cofactor evidence="1">
        <name>Zn(2+)</name>
        <dbReference type="ChEBI" id="CHEBI:29105"/>
    </cofactor>
    <text evidence="1">Binds 1 Zn(2+) ion per subunit.</text>
</comment>
<comment type="subunit">
    <text evidence="1">In cyanobacteria the RNAP catalytic core is composed of 2 alpha, 1 beta, 1 beta', 1 gamma and 1 omega subunit. When a sigma factor is associated with the core the holoenzyme is formed, which can initiate transcription.</text>
</comment>
<comment type="similarity">
    <text evidence="1">Belongs to the RNA polymerase beta' chain family. RpoC2 subfamily.</text>
</comment>
<feature type="chain" id="PRO_0000353528" description="DNA-directed RNA polymerase subunit beta'">
    <location>
        <begin position="1"/>
        <end position="1374"/>
    </location>
</feature>
<feature type="region of interest" description="Disordered" evidence="2">
    <location>
        <begin position="1"/>
        <end position="47"/>
    </location>
</feature>
<feature type="region of interest" description="Disordered" evidence="2">
    <location>
        <begin position="1343"/>
        <end position="1374"/>
    </location>
</feature>
<feature type="compositionally biased region" description="Basic residues" evidence="2">
    <location>
        <begin position="7"/>
        <end position="28"/>
    </location>
</feature>
<feature type="compositionally biased region" description="Low complexity" evidence="2">
    <location>
        <begin position="29"/>
        <end position="45"/>
    </location>
</feature>
<feature type="compositionally biased region" description="Low complexity" evidence="2">
    <location>
        <begin position="1362"/>
        <end position="1374"/>
    </location>
</feature>
<feature type="binding site" evidence="1">
    <location>
        <position position="258"/>
    </location>
    <ligand>
        <name>Zn(2+)</name>
        <dbReference type="ChEBI" id="CHEBI:29105"/>
    </ligand>
</feature>
<feature type="binding site" evidence="1">
    <location>
        <position position="325"/>
    </location>
    <ligand>
        <name>Zn(2+)</name>
        <dbReference type="ChEBI" id="CHEBI:29105"/>
    </ligand>
</feature>
<feature type="binding site" evidence="1">
    <location>
        <position position="332"/>
    </location>
    <ligand>
        <name>Zn(2+)</name>
        <dbReference type="ChEBI" id="CHEBI:29105"/>
    </ligand>
</feature>
<feature type="binding site" evidence="1">
    <location>
        <position position="335"/>
    </location>
    <ligand>
        <name>Zn(2+)</name>
        <dbReference type="ChEBI" id="CHEBI:29105"/>
    </ligand>
</feature>
<accession>A2C6T1</accession>
<sequence length="1374" mass="149586">MTSTSPKSRKPSTKTTKSKSKSKSKSKAAKAAAASASPALARTPPQFRNRVVDKKALKQLVAWAYKTHGTAVTASMADNLKDLGFRYATQAAVSISVEDLKVPEAKQDLLCQAEAQITATEECYRLGEITEVERHTKVIDTWTETNERLVDAVKKNFNQNDPLNSVWMMANSGARGNMSQVRQLVGMRGLMANPQGEIIDLPIRTNFREGLTVTEYVISSYGARKGLVDTALRTADSGYLTRRLVDVAQDVIVREDDCGTTRGIIVKVEDGGFGSRLVGRLTADQVVNVDGEILAERNTEIDPPLSKRFEKAAITEVMVRSPLTCEANRSVCRKCYGWALAHNELADLGEAVGIIAAQSIGEPGTQLTMRTFHTGGVSTAETGVVRSTVAGTVEFGPKARVRGYRTPHGLEAQQSEVDFTLTVKPSGKGRAQRIDITTGSLLFVSDGQEIEADVTVVQIASVAVKKSVEKATKDVICDLAGQVRYEQVIQPREVKDRQGNITLKAQRLGRLWVLAGDVYNLPPNAEPVVQGNVKVERGQVLAEASQASEFGGEVRLRDSIGDSREVQIVTTSMTMKDFKLLGESTHSGELWHLEAKEGTRYRLNTIPGSKIGNGEVVAELADDRFRTQTGGLVRFAPGLAIKKARSAKNGFEVNKGGTLLWIPQETHEINKDISLLMIEDGQWIEAGTEVVKDIFSQTAGIVTVTQKNDILREIIVRSGSFHLCAETKALERFRGDGQIVNPGETIAKGINSEAMVFVQTEDTPEGTGLLLRPVEEYTIPNEAHLPELTHVKQPKGPHLGIKATQRLAFKDGELIKSVEGVELLKTQLILETFDTTPQMTVDVEAVRDKRAKTIERLRLVILESILVRRDTISDSSHGSTHTELQIEDGQSVKASDVVATTQILCKQEGIAQLPVPQEGDPVRRLIVERDEDTITVTTKGSPLVGVGQRLVDGDSLAKDEPSSCCGEVEEVEGKAITLRLGRPYMVSPDSVLHVRDGDLVQRGDGLALLVFERQKTGDIVQGLPRIEELLEARRPRESAVLCKKPGTVEIKQGEDDESITVTVIEADDAIGEYPILLGRNVMVSNGQQVHAGELLTDGPINPHELLDCFFEDLRGRKPLMDAAQEAIAKLQHRLVTEVQNVYKSQGVSIDDKHIEVIVRQMTSKVRIEDAGDTTLLPGELIELRQVEDTNQAMAITGGAPSEFTPVLLGITKASLNTDSFISAASFQETTRVLTEAAIEGKSDWLRGLKENVIIGRLIPAGTGFSGFQEELRAEAGPHPDILAEDPAGYRRMQNLRPDYTVDMPAAPAASSTAVLADPSAADLEATRSRHGIDPAASNFAAFVRPTGENELEEEQLPDPSALEGLQQEGLLTEE</sequence>